<name>RS12_DEIRA</name>
<sequence>MPTTQQLLRKGRKVLQKKSKVPALKGSPFRRGVCTVVKTTTPKKPNSALRKIARVRLSSGFEVTAYIPGEGHNLQEHSVVLIRGGRVKDLPGVRYHIVRGSLDTQGVKDRNKSRSKYGTKKPKAGAAAAKK</sequence>
<organism>
    <name type="scientific">Deinococcus radiodurans (strain ATCC 13939 / DSM 20539 / JCM 16871 / CCUG 27074 / LMG 4051 / NBRC 15346 / NCIMB 9279 / VKM B-1422 / R1)</name>
    <dbReference type="NCBI Taxonomy" id="243230"/>
    <lineage>
        <taxon>Bacteria</taxon>
        <taxon>Thermotogati</taxon>
        <taxon>Deinococcota</taxon>
        <taxon>Deinococci</taxon>
        <taxon>Deinococcales</taxon>
        <taxon>Deinococcaceae</taxon>
        <taxon>Deinococcus</taxon>
    </lineage>
</organism>
<keyword id="KW-0488">Methylation</keyword>
<keyword id="KW-1185">Reference proteome</keyword>
<keyword id="KW-0687">Ribonucleoprotein</keyword>
<keyword id="KW-0689">Ribosomal protein</keyword>
<keyword id="KW-0694">RNA-binding</keyword>
<keyword id="KW-0699">rRNA-binding</keyword>
<keyword id="KW-0820">tRNA-binding</keyword>
<protein>
    <recommendedName>
        <fullName evidence="2">Small ribosomal subunit protein uS12</fullName>
    </recommendedName>
    <alternativeName>
        <fullName evidence="4">30S ribosomal protein S12</fullName>
    </alternativeName>
</protein>
<gene>
    <name evidence="2" type="primary">rpsL</name>
    <name type="ordered locus">DR_0305</name>
</gene>
<feature type="chain" id="PRO_0000146216" description="Small ribosomal subunit protein uS12">
    <location>
        <begin position="1"/>
        <end position="131"/>
    </location>
</feature>
<feature type="region of interest" description="Disordered" evidence="3">
    <location>
        <begin position="1"/>
        <end position="22"/>
    </location>
</feature>
<feature type="region of interest" description="Disordered" evidence="3">
    <location>
        <begin position="102"/>
        <end position="131"/>
    </location>
</feature>
<feature type="compositionally biased region" description="Basic residues" evidence="3">
    <location>
        <begin position="9"/>
        <end position="20"/>
    </location>
</feature>
<feature type="compositionally biased region" description="Basic residues" evidence="3">
    <location>
        <begin position="113"/>
        <end position="131"/>
    </location>
</feature>
<feature type="modified residue" description="3-methylthioaspartic acid" evidence="1">
    <location>
        <position position="89"/>
    </location>
</feature>
<comment type="function">
    <text evidence="2">With S4 and S5 plays an important role in translational accuracy.</text>
</comment>
<comment type="function">
    <text evidence="2">Interacts with and stabilizes bases of the 16S rRNA that are involved in tRNA selection in the A site and with the mRNA backbone. Located at the interface of the 30S and 50S subunits, it traverses the body of the 30S subunit contacting proteins on the other side and probably holding the rRNA structure together. The combined cluster of proteins S8, S12 and S17 appears to hold together the shoulder and platform of the 30S subunit.</text>
</comment>
<comment type="subunit">
    <text evidence="2">Part of the 30S ribosomal subunit. Contacts proteins S8 and S17. May interact with IF1 in the 30S initiation complex.</text>
</comment>
<comment type="similarity">
    <text evidence="2">Belongs to the universal ribosomal protein uS12 family.</text>
</comment>
<proteinExistence type="inferred from homology"/>
<dbReference type="EMBL" id="AE000513">
    <property type="protein sequence ID" value="AAF09885.1"/>
    <property type="molecule type" value="Genomic_DNA"/>
</dbReference>
<dbReference type="PIR" id="C75536">
    <property type="entry name" value="C75536"/>
</dbReference>
<dbReference type="RefSeq" id="NP_294028.1">
    <property type="nucleotide sequence ID" value="NC_001263.1"/>
</dbReference>
<dbReference type="RefSeq" id="WP_010886950.1">
    <property type="nucleotide sequence ID" value="NZ_JMLF01000019.1"/>
</dbReference>
<dbReference type="SMR" id="Q9RXK7"/>
<dbReference type="FunCoup" id="Q9RXK7">
    <property type="interactions" value="424"/>
</dbReference>
<dbReference type="STRING" id="243230.DR_0305"/>
<dbReference type="PaxDb" id="243230-DR_0305"/>
<dbReference type="EnsemblBacteria" id="AAF09885">
    <property type="protein sequence ID" value="AAF09885"/>
    <property type="gene ID" value="DR_0305"/>
</dbReference>
<dbReference type="GeneID" id="69516537"/>
<dbReference type="KEGG" id="dra:DR_0305"/>
<dbReference type="PATRIC" id="fig|243230.17.peg.471"/>
<dbReference type="eggNOG" id="COG0048">
    <property type="taxonomic scope" value="Bacteria"/>
</dbReference>
<dbReference type="HOGENOM" id="CLU_104295_1_2_0"/>
<dbReference type="InParanoid" id="Q9RXK7"/>
<dbReference type="OrthoDB" id="9802366at2"/>
<dbReference type="Proteomes" id="UP000002524">
    <property type="component" value="Chromosome 1"/>
</dbReference>
<dbReference type="GO" id="GO:0005840">
    <property type="term" value="C:ribosome"/>
    <property type="evidence" value="ECO:0000318"/>
    <property type="project" value="GO_Central"/>
</dbReference>
<dbReference type="GO" id="GO:0015935">
    <property type="term" value="C:small ribosomal subunit"/>
    <property type="evidence" value="ECO:0007669"/>
    <property type="project" value="InterPro"/>
</dbReference>
<dbReference type="GO" id="GO:0019843">
    <property type="term" value="F:rRNA binding"/>
    <property type="evidence" value="ECO:0007669"/>
    <property type="project" value="UniProtKB-UniRule"/>
</dbReference>
<dbReference type="GO" id="GO:0003735">
    <property type="term" value="F:structural constituent of ribosome"/>
    <property type="evidence" value="ECO:0000318"/>
    <property type="project" value="GO_Central"/>
</dbReference>
<dbReference type="GO" id="GO:0000049">
    <property type="term" value="F:tRNA binding"/>
    <property type="evidence" value="ECO:0007669"/>
    <property type="project" value="UniProtKB-UniRule"/>
</dbReference>
<dbReference type="GO" id="GO:0006412">
    <property type="term" value="P:translation"/>
    <property type="evidence" value="ECO:0000318"/>
    <property type="project" value="GO_Central"/>
</dbReference>
<dbReference type="CDD" id="cd03368">
    <property type="entry name" value="Ribosomal_S12"/>
    <property type="match status" value="1"/>
</dbReference>
<dbReference type="FunFam" id="2.40.50.140:FF:000001">
    <property type="entry name" value="30S ribosomal protein S12"/>
    <property type="match status" value="1"/>
</dbReference>
<dbReference type="Gene3D" id="2.40.50.140">
    <property type="entry name" value="Nucleic acid-binding proteins"/>
    <property type="match status" value="1"/>
</dbReference>
<dbReference type="HAMAP" id="MF_00403_B">
    <property type="entry name" value="Ribosomal_uS12_B"/>
    <property type="match status" value="1"/>
</dbReference>
<dbReference type="InterPro" id="IPR012340">
    <property type="entry name" value="NA-bd_OB-fold"/>
</dbReference>
<dbReference type="InterPro" id="IPR006032">
    <property type="entry name" value="Ribosomal_uS12"/>
</dbReference>
<dbReference type="InterPro" id="IPR005679">
    <property type="entry name" value="Ribosomal_uS12_bac"/>
</dbReference>
<dbReference type="NCBIfam" id="TIGR00981">
    <property type="entry name" value="rpsL_bact"/>
    <property type="match status" value="1"/>
</dbReference>
<dbReference type="PANTHER" id="PTHR11652">
    <property type="entry name" value="30S RIBOSOMAL PROTEIN S12 FAMILY MEMBER"/>
    <property type="match status" value="1"/>
</dbReference>
<dbReference type="Pfam" id="PF00164">
    <property type="entry name" value="Ribosom_S12_S23"/>
    <property type="match status" value="1"/>
</dbReference>
<dbReference type="PIRSF" id="PIRSF002133">
    <property type="entry name" value="Ribosomal_S12/S23"/>
    <property type="match status" value="1"/>
</dbReference>
<dbReference type="PRINTS" id="PR01034">
    <property type="entry name" value="RIBOSOMALS12"/>
</dbReference>
<dbReference type="SUPFAM" id="SSF50249">
    <property type="entry name" value="Nucleic acid-binding proteins"/>
    <property type="match status" value="1"/>
</dbReference>
<dbReference type="PROSITE" id="PS00055">
    <property type="entry name" value="RIBOSOMAL_S12"/>
    <property type="match status" value="1"/>
</dbReference>
<accession>Q9RXK7</accession>
<reference key="1">
    <citation type="journal article" date="1999" name="Science">
        <title>Genome sequence of the radioresistant bacterium Deinococcus radiodurans R1.</title>
        <authorList>
            <person name="White O."/>
            <person name="Eisen J.A."/>
            <person name="Heidelberg J.F."/>
            <person name="Hickey E.K."/>
            <person name="Peterson J.D."/>
            <person name="Dodson R.J."/>
            <person name="Haft D.H."/>
            <person name="Gwinn M.L."/>
            <person name="Nelson W.C."/>
            <person name="Richardson D.L."/>
            <person name="Moffat K.S."/>
            <person name="Qin H."/>
            <person name="Jiang L."/>
            <person name="Pamphile W."/>
            <person name="Crosby M."/>
            <person name="Shen M."/>
            <person name="Vamathevan J.J."/>
            <person name="Lam P."/>
            <person name="McDonald L.A."/>
            <person name="Utterback T.R."/>
            <person name="Zalewski C."/>
            <person name="Makarova K.S."/>
            <person name="Aravind L."/>
            <person name="Daly M.J."/>
            <person name="Minton K.W."/>
            <person name="Fleischmann R.D."/>
            <person name="Ketchum K.A."/>
            <person name="Nelson K.E."/>
            <person name="Salzberg S.L."/>
            <person name="Smith H.O."/>
            <person name="Venter J.C."/>
            <person name="Fraser C.M."/>
        </authorList>
    </citation>
    <scope>NUCLEOTIDE SEQUENCE [LARGE SCALE GENOMIC DNA]</scope>
    <source>
        <strain>ATCC 13939 / DSM 20539 / JCM 16871 / CCUG 27074 / LMG 4051 / NBRC 15346 / NCIMB 9279 / VKM B-1422 / R1</strain>
    </source>
</reference>
<evidence type="ECO:0000250" key="1"/>
<evidence type="ECO:0000255" key="2">
    <source>
        <dbReference type="HAMAP-Rule" id="MF_00403"/>
    </source>
</evidence>
<evidence type="ECO:0000256" key="3">
    <source>
        <dbReference type="SAM" id="MobiDB-lite"/>
    </source>
</evidence>
<evidence type="ECO:0000305" key="4"/>